<dbReference type="EC" id="2.1.1.-" evidence="1"/>
<dbReference type="EC" id="2.1.1.35" evidence="1"/>
<dbReference type="EMBL" id="CP001113">
    <property type="protein sequence ID" value="ACF61574.1"/>
    <property type="molecule type" value="Genomic_DNA"/>
</dbReference>
<dbReference type="RefSeq" id="WP_000186970.1">
    <property type="nucleotide sequence ID" value="NZ_CCMR01000001.1"/>
</dbReference>
<dbReference type="SMR" id="B4T0X5"/>
<dbReference type="KEGG" id="see:SNSL254_A4460"/>
<dbReference type="HOGENOM" id="CLU_043022_0_0_6"/>
<dbReference type="Proteomes" id="UP000008824">
    <property type="component" value="Chromosome"/>
</dbReference>
<dbReference type="GO" id="GO:0005829">
    <property type="term" value="C:cytosol"/>
    <property type="evidence" value="ECO:0007669"/>
    <property type="project" value="TreeGrafter"/>
</dbReference>
<dbReference type="GO" id="GO:0019843">
    <property type="term" value="F:rRNA binding"/>
    <property type="evidence" value="ECO:0007669"/>
    <property type="project" value="TreeGrafter"/>
</dbReference>
<dbReference type="GO" id="GO:0030697">
    <property type="term" value="F:tRNA (uracil(54)-C5)-methyltransferase activity, S-adenosyl methionine-dependent"/>
    <property type="evidence" value="ECO:0007669"/>
    <property type="project" value="UniProtKB-UniRule"/>
</dbReference>
<dbReference type="GO" id="GO:0000049">
    <property type="term" value="F:tRNA binding"/>
    <property type="evidence" value="ECO:0007669"/>
    <property type="project" value="TreeGrafter"/>
</dbReference>
<dbReference type="GO" id="GO:0030488">
    <property type="term" value="P:tRNA methylation"/>
    <property type="evidence" value="ECO:0007669"/>
    <property type="project" value="UniProtKB-UniRule"/>
</dbReference>
<dbReference type="CDD" id="cd02440">
    <property type="entry name" value="AdoMet_MTases"/>
    <property type="match status" value="1"/>
</dbReference>
<dbReference type="FunFam" id="2.40.50.1070:FF:000001">
    <property type="entry name" value="tRNA/tmRNA (uracil-C(5))-methyltransferase"/>
    <property type="match status" value="1"/>
</dbReference>
<dbReference type="FunFam" id="3.40.50.150:FF:000012">
    <property type="entry name" value="tRNA/tmRNA (uracil-C(5))-methyltransferase"/>
    <property type="match status" value="1"/>
</dbReference>
<dbReference type="Gene3D" id="2.40.50.1070">
    <property type="match status" value="1"/>
</dbReference>
<dbReference type="Gene3D" id="3.40.50.150">
    <property type="entry name" value="Vaccinia Virus protein VP39"/>
    <property type="match status" value="1"/>
</dbReference>
<dbReference type="HAMAP" id="MF_01011">
    <property type="entry name" value="RNA_methyltr_TrmA"/>
    <property type="match status" value="1"/>
</dbReference>
<dbReference type="InterPro" id="IPR030390">
    <property type="entry name" value="MeTrfase_TrmA_AS"/>
</dbReference>
<dbReference type="InterPro" id="IPR030391">
    <property type="entry name" value="MeTrfase_TrmA_CS"/>
</dbReference>
<dbReference type="InterPro" id="IPR029063">
    <property type="entry name" value="SAM-dependent_MTases_sf"/>
</dbReference>
<dbReference type="InterPro" id="IPR011869">
    <property type="entry name" value="TrmA_MeTrfase"/>
</dbReference>
<dbReference type="InterPro" id="IPR010280">
    <property type="entry name" value="U5_MeTrfase_fam"/>
</dbReference>
<dbReference type="NCBIfam" id="TIGR02143">
    <property type="entry name" value="trmA_only"/>
    <property type="match status" value="1"/>
</dbReference>
<dbReference type="PANTHER" id="PTHR47790">
    <property type="entry name" value="TRNA/TMRNA (URACIL-C(5))-METHYLTRANSFERASE"/>
    <property type="match status" value="1"/>
</dbReference>
<dbReference type="PANTHER" id="PTHR47790:SF2">
    <property type="entry name" value="TRNA_TMRNA (URACIL-C(5))-METHYLTRANSFERASE"/>
    <property type="match status" value="1"/>
</dbReference>
<dbReference type="Pfam" id="PF05958">
    <property type="entry name" value="tRNA_U5-meth_tr"/>
    <property type="match status" value="1"/>
</dbReference>
<dbReference type="SUPFAM" id="SSF53335">
    <property type="entry name" value="S-adenosyl-L-methionine-dependent methyltransferases"/>
    <property type="match status" value="1"/>
</dbReference>
<dbReference type="PROSITE" id="PS51687">
    <property type="entry name" value="SAM_MT_RNA_M5U"/>
    <property type="match status" value="1"/>
</dbReference>
<dbReference type="PROSITE" id="PS01230">
    <property type="entry name" value="TRMA_1"/>
    <property type="match status" value="1"/>
</dbReference>
<dbReference type="PROSITE" id="PS01231">
    <property type="entry name" value="TRMA_2"/>
    <property type="match status" value="1"/>
</dbReference>
<feature type="chain" id="PRO_1000198555" description="tRNA/tmRNA (uracil-C(5))-methyltransferase">
    <location>
        <begin position="1"/>
        <end position="366"/>
    </location>
</feature>
<feature type="active site" description="Nucleophile" evidence="1">
    <location>
        <position position="324"/>
    </location>
</feature>
<feature type="active site" description="Proton acceptor" evidence="1">
    <location>
        <position position="358"/>
    </location>
</feature>
<feature type="binding site" evidence="1">
    <location>
        <position position="190"/>
    </location>
    <ligand>
        <name>S-adenosyl-L-methionine</name>
        <dbReference type="ChEBI" id="CHEBI:59789"/>
    </ligand>
</feature>
<feature type="binding site" evidence="1">
    <location>
        <position position="218"/>
    </location>
    <ligand>
        <name>S-adenosyl-L-methionine</name>
        <dbReference type="ChEBI" id="CHEBI:59789"/>
    </ligand>
</feature>
<feature type="binding site" evidence="1">
    <location>
        <position position="223"/>
    </location>
    <ligand>
        <name>S-adenosyl-L-methionine</name>
        <dbReference type="ChEBI" id="CHEBI:59789"/>
    </ligand>
</feature>
<feature type="binding site" evidence="1">
    <location>
        <position position="239"/>
    </location>
    <ligand>
        <name>S-adenosyl-L-methionine</name>
        <dbReference type="ChEBI" id="CHEBI:59789"/>
    </ligand>
</feature>
<feature type="binding site" evidence="1">
    <location>
        <position position="299"/>
    </location>
    <ligand>
        <name>S-adenosyl-L-methionine</name>
        <dbReference type="ChEBI" id="CHEBI:59789"/>
    </ligand>
</feature>
<reference key="1">
    <citation type="journal article" date="2011" name="J. Bacteriol.">
        <title>Comparative genomics of 28 Salmonella enterica isolates: evidence for CRISPR-mediated adaptive sublineage evolution.</title>
        <authorList>
            <person name="Fricke W.F."/>
            <person name="Mammel M.K."/>
            <person name="McDermott P.F."/>
            <person name="Tartera C."/>
            <person name="White D.G."/>
            <person name="Leclerc J.E."/>
            <person name="Ravel J."/>
            <person name="Cebula T.A."/>
        </authorList>
    </citation>
    <scope>NUCLEOTIDE SEQUENCE [LARGE SCALE GENOMIC DNA]</scope>
    <source>
        <strain>SL254</strain>
    </source>
</reference>
<protein>
    <recommendedName>
        <fullName evidence="1">tRNA/tmRNA (uracil-C(5))-methyltransferase</fullName>
        <ecNumber evidence="1">2.1.1.-</ecNumber>
        <ecNumber evidence="1">2.1.1.35</ecNumber>
    </recommendedName>
    <alternativeName>
        <fullName evidence="1">tRNA (uracil(54)-C(5))-methyltransferase</fullName>
    </alternativeName>
    <alternativeName>
        <fullName evidence="1">tRNA(m5U54)-methyltransferase</fullName>
        <shortName evidence="1">RUMT</shortName>
    </alternativeName>
    <alternativeName>
        <fullName evidence="1">tmRNA (uracil(341)-C(5))-methyltransferase</fullName>
    </alternativeName>
</protein>
<gene>
    <name evidence="1" type="primary">trmA</name>
    <name type="ordered locus">SNSL254_A4460</name>
</gene>
<name>TRMA_SALNS</name>
<organism>
    <name type="scientific">Salmonella newport (strain SL254)</name>
    <dbReference type="NCBI Taxonomy" id="423368"/>
    <lineage>
        <taxon>Bacteria</taxon>
        <taxon>Pseudomonadati</taxon>
        <taxon>Pseudomonadota</taxon>
        <taxon>Gammaproteobacteria</taxon>
        <taxon>Enterobacterales</taxon>
        <taxon>Enterobacteriaceae</taxon>
        <taxon>Salmonella</taxon>
    </lineage>
</organism>
<proteinExistence type="inferred from homology"/>
<comment type="function">
    <text evidence="1">Dual-specificity methyltransferase that catalyzes the formation of 5-methyluridine at position 54 (m5U54) in all tRNAs, and that of position 341 (m5U341) in tmRNA (transfer-mRNA).</text>
</comment>
<comment type="catalytic activity">
    <reaction evidence="1">
        <text>uridine(54) in tRNA + S-adenosyl-L-methionine = 5-methyluridine(54) in tRNA + S-adenosyl-L-homocysteine + H(+)</text>
        <dbReference type="Rhea" id="RHEA:42712"/>
        <dbReference type="Rhea" id="RHEA-COMP:10167"/>
        <dbReference type="Rhea" id="RHEA-COMP:10193"/>
        <dbReference type="ChEBI" id="CHEBI:15378"/>
        <dbReference type="ChEBI" id="CHEBI:57856"/>
        <dbReference type="ChEBI" id="CHEBI:59789"/>
        <dbReference type="ChEBI" id="CHEBI:65315"/>
        <dbReference type="ChEBI" id="CHEBI:74447"/>
        <dbReference type="EC" id="2.1.1.35"/>
    </reaction>
</comment>
<comment type="catalytic activity">
    <reaction evidence="1">
        <text>uridine(341) in tmRNA + S-adenosyl-L-methionine = 5-methyluridine(341) in tmRNA + S-adenosyl-L-homocysteine + H(+)</text>
        <dbReference type="Rhea" id="RHEA:43612"/>
        <dbReference type="Rhea" id="RHEA-COMP:10630"/>
        <dbReference type="Rhea" id="RHEA-COMP:10631"/>
        <dbReference type="ChEBI" id="CHEBI:15378"/>
        <dbReference type="ChEBI" id="CHEBI:57856"/>
        <dbReference type="ChEBI" id="CHEBI:59789"/>
        <dbReference type="ChEBI" id="CHEBI:65315"/>
        <dbReference type="ChEBI" id="CHEBI:74447"/>
    </reaction>
</comment>
<comment type="similarity">
    <text evidence="1">Belongs to the class I-like SAM-binding methyltransferase superfamily. RNA M5U methyltransferase family. TrmA subfamily.</text>
</comment>
<sequence length="366" mass="41858">MTPEHLPTEQYEAQLAEKVARLQSMMAPFSDLVPEVFRSPVSHYRMRAEFRLWHDGDDLYHIMFDQQTKSRIRVDTFPAASQLINTLMKAMIAGVRDNHALRHKLFQMDYLTTLSNQAVVSLLYHKKLDEEWREAATALRDALRAQGLNVHLIGRATKTKIELDQDYIDERLPVAGKEMIYRQVENSFTQPNAAMNIQMLEWALEVTKDSKGDLLELYCGNGNFSLALARNFNRVLATEIAKPSVAAAQYNIAANHIDNVQIIRMAAEEFTLAMNGVREFNRLQGIDLKGYQCETIFVDPPRSGLDSETEKMVQAYPRILYISCNPETLCKNLETLSQTHTVSRLALFDQFPYTHHMECGVLLTAR</sequence>
<keyword id="KW-0489">Methyltransferase</keyword>
<keyword id="KW-0949">S-adenosyl-L-methionine</keyword>
<keyword id="KW-0808">Transferase</keyword>
<keyword id="KW-0819">tRNA processing</keyword>
<accession>B4T0X5</accession>
<evidence type="ECO:0000255" key="1">
    <source>
        <dbReference type="HAMAP-Rule" id="MF_01011"/>
    </source>
</evidence>